<proteinExistence type="inferred from homology"/>
<name>RIMP_DEIGD</name>
<organism>
    <name type="scientific">Deinococcus geothermalis (strain DSM 11300 / CIP 105573 / AG-3a)</name>
    <dbReference type="NCBI Taxonomy" id="319795"/>
    <lineage>
        <taxon>Bacteria</taxon>
        <taxon>Thermotogati</taxon>
        <taxon>Deinococcota</taxon>
        <taxon>Deinococci</taxon>
        <taxon>Deinococcales</taxon>
        <taxon>Deinococcaceae</taxon>
        <taxon>Deinococcus</taxon>
    </lineage>
</organism>
<keyword id="KW-0963">Cytoplasm</keyword>
<keyword id="KW-0690">Ribosome biogenesis</keyword>
<accession>Q1IZ05</accession>
<protein>
    <recommendedName>
        <fullName evidence="1">Ribosome maturation factor RimP</fullName>
    </recommendedName>
</protein>
<evidence type="ECO:0000255" key="1">
    <source>
        <dbReference type="HAMAP-Rule" id="MF_01077"/>
    </source>
</evidence>
<comment type="function">
    <text evidence="1">Required for maturation of 30S ribosomal subunits.</text>
</comment>
<comment type="subcellular location">
    <subcellularLocation>
        <location evidence="1">Cytoplasm</location>
    </subcellularLocation>
</comment>
<comment type="similarity">
    <text evidence="1">Belongs to the RimP family.</text>
</comment>
<dbReference type="EMBL" id="CP000359">
    <property type="protein sequence ID" value="ABF45529.1"/>
    <property type="molecule type" value="Genomic_DNA"/>
</dbReference>
<dbReference type="RefSeq" id="WP_011530366.1">
    <property type="nucleotide sequence ID" value="NC_008025.1"/>
</dbReference>
<dbReference type="SMR" id="Q1IZ05"/>
<dbReference type="STRING" id="319795.Dgeo_1233"/>
<dbReference type="KEGG" id="dge:Dgeo_1233"/>
<dbReference type="eggNOG" id="COG0779">
    <property type="taxonomic scope" value="Bacteria"/>
</dbReference>
<dbReference type="HOGENOM" id="CLU_070525_1_1_0"/>
<dbReference type="Proteomes" id="UP000002431">
    <property type="component" value="Chromosome"/>
</dbReference>
<dbReference type="GO" id="GO:0005829">
    <property type="term" value="C:cytosol"/>
    <property type="evidence" value="ECO:0007669"/>
    <property type="project" value="TreeGrafter"/>
</dbReference>
<dbReference type="GO" id="GO:0000028">
    <property type="term" value="P:ribosomal small subunit assembly"/>
    <property type="evidence" value="ECO:0007669"/>
    <property type="project" value="TreeGrafter"/>
</dbReference>
<dbReference type="GO" id="GO:0006412">
    <property type="term" value="P:translation"/>
    <property type="evidence" value="ECO:0007669"/>
    <property type="project" value="TreeGrafter"/>
</dbReference>
<dbReference type="Gene3D" id="3.30.300.70">
    <property type="entry name" value="RimP-like superfamily, N-terminal"/>
    <property type="match status" value="1"/>
</dbReference>
<dbReference type="HAMAP" id="MF_01077">
    <property type="entry name" value="RimP"/>
    <property type="match status" value="1"/>
</dbReference>
<dbReference type="InterPro" id="IPR003728">
    <property type="entry name" value="Ribosome_maturation_RimP"/>
</dbReference>
<dbReference type="InterPro" id="IPR028998">
    <property type="entry name" value="RimP_C"/>
</dbReference>
<dbReference type="InterPro" id="IPR028989">
    <property type="entry name" value="RimP_N"/>
</dbReference>
<dbReference type="InterPro" id="IPR035956">
    <property type="entry name" value="RimP_N_sf"/>
</dbReference>
<dbReference type="NCBIfam" id="NF011239">
    <property type="entry name" value="PRK14645.1"/>
    <property type="match status" value="1"/>
</dbReference>
<dbReference type="PANTHER" id="PTHR33867">
    <property type="entry name" value="RIBOSOME MATURATION FACTOR RIMP"/>
    <property type="match status" value="1"/>
</dbReference>
<dbReference type="PANTHER" id="PTHR33867:SF1">
    <property type="entry name" value="RIBOSOME MATURATION FACTOR RIMP"/>
    <property type="match status" value="1"/>
</dbReference>
<dbReference type="Pfam" id="PF17384">
    <property type="entry name" value="DUF150_C"/>
    <property type="match status" value="1"/>
</dbReference>
<dbReference type="Pfam" id="PF02576">
    <property type="entry name" value="RimP_N"/>
    <property type="match status" value="1"/>
</dbReference>
<dbReference type="SUPFAM" id="SSF75420">
    <property type="entry name" value="YhbC-like, N-terminal domain"/>
    <property type="match status" value="1"/>
</dbReference>
<gene>
    <name evidence="1" type="primary">rimP</name>
    <name type="ordered locus">Dgeo_1233</name>
</gene>
<feature type="chain" id="PRO_0000384638" description="Ribosome maturation factor RimP">
    <location>
        <begin position="1"/>
        <end position="155"/>
    </location>
</feature>
<sequence length="155" mass="17170">MNNNATHNAPNLRTLAEGVLQPLGYEVLDVQVQNPGRRPIVVIRMDRLDEQPVTVEDLETASRAVGAEFDRVDPIAGEYRLELESPGAKRPLTRARHYERMLGLKARVRGDGHSFTAPIKAVDGEQVTFDVGGEDVTLTVGTFQGNLAEFPDRHR</sequence>
<reference key="1">
    <citation type="submission" date="2006-04" db="EMBL/GenBank/DDBJ databases">
        <title>Complete sequence of chromosome of Deinococcus geothermalis DSM 11300.</title>
        <authorList>
            <person name="Copeland A."/>
            <person name="Lucas S."/>
            <person name="Lapidus A."/>
            <person name="Barry K."/>
            <person name="Detter J.C."/>
            <person name="Glavina del Rio T."/>
            <person name="Hammon N."/>
            <person name="Israni S."/>
            <person name="Dalin E."/>
            <person name="Tice H."/>
            <person name="Pitluck S."/>
            <person name="Brettin T."/>
            <person name="Bruce D."/>
            <person name="Han C."/>
            <person name="Tapia R."/>
            <person name="Saunders E."/>
            <person name="Gilna P."/>
            <person name="Schmutz J."/>
            <person name="Larimer F."/>
            <person name="Land M."/>
            <person name="Hauser L."/>
            <person name="Kyrpides N."/>
            <person name="Kim E."/>
            <person name="Daly M.J."/>
            <person name="Fredrickson J.K."/>
            <person name="Makarova K.S."/>
            <person name="Gaidamakova E.K."/>
            <person name="Zhai M."/>
            <person name="Richardson P."/>
        </authorList>
    </citation>
    <scope>NUCLEOTIDE SEQUENCE [LARGE SCALE GENOMIC DNA]</scope>
    <source>
        <strain>DSM 11300 / CIP 105573 / AG-3a</strain>
    </source>
</reference>